<sequence>MSETTDKQLTEAEKRKLLRERRLAKMAQGKASDRLNTILSQGSSVKSVSPPAVTSVLENKATKSTDTATVTDSSTNATSVSPSAAKATPTSTGVSSAISDFDDPEIQDISDVAVNNSGVLALGNLSGLDSNNPSQPNLDEMFQKIMQQQSQHNCDNDNNGENNPMAEMLKMFNSMGGGDNNGGLGGFDSMFSGSPNSPPPESISPEMMKYQADLAKYHTYQEQLWQFRFLVVRILATIFNFAYHFITIPSFTASNHAYVRDLSEVYPLLGFMTIFTSIEVVIIATYYLLFTKLGLFHASNQKSFILKGISTLSMFVPQLLRYEPLVATFLGYKELLGIFVGDLSLVVVMFGLLSFSN</sequence>
<organism>
    <name type="scientific">Lodderomyces elongisporus (strain ATCC 11503 / CBS 2605 / JCM 1781 / NBRC 1676 / NRRL YB-4239)</name>
    <name type="common">Yeast</name>
    <name type="synonym">Saccharomyces elongisporus</name>
    <dbReference type="NCBI Taxonomy" id="379508"/>
    <lineage>
        <taxon>Eukaryota</taxon>
        <taxon>Fungi</taxon>
        <taxon>Dikarya</taxon>
        <taxon>Ascomycota</taxon>
        <taxon>Saccharomycotina</taxon>
        <taxon>Pichiomycetes</taxon>
        <taxon>Debaryomycetaceae</taxon>
        <taxon>Candida/Lodderomyces clade</taxon>
        <taxon>Lodderomyces</taxon>
    </lineage>
</organism>
<accession>A5DSM4</accession>
<reference key="1">
    <citation type="journal article" date="2009" name="Nature">
        <title>Evolution of pathogenicity and sexual reproduction in eight Candida genomes.</title>
        <authorList>
            <person name="Butler G."/>
            <person name="Rasmussen M.D."/>
            <person name="Lin M.F."/>
            <person name="Santos M.A.S."/>
            <person name="Sakthikumar S."/>
            <person name="Munro C.A."/>
            <person name="Rheinbay E."/>
            <person name="Grabherr M."/>
            <person name="Forche A."/>
            <person name="Reedy J.L."/>
            <person name="Agrafioti I."/>
            <person name="Arnaud M.B."/>
            <person name="Bates S."/>
            <person name="Brown A.J.P."/>
            <person name="Brunke S."/>
            <person name="Costanzo M.C."/>
            <person name="Fitzpatrick D.A."/>
            <person name="de Groot P.W.J."/>
            <person name="Harris D."/>
            <person name="Hoyer L.L."/>
            <person name="Hube B."/>
            <person name="Klis F.M."/>
            <person name="Kodira C."/>
            <person name="Lennard N."/>
            <person name="Logue M.E."/>
            <person name="Martin R."/>
            <person name="Neiman A.M."/>
            <person name="Nikolaou E."/>
            <person name="Quail M.A."/>
            <person name="Quinn J."/>
            <person name="Santos M.C."/>
            <person name="Schmitzberger F.F."/>
            <person name="Sherlock G."/>
            <person name="Shah P."/>
            <person name="Silverstein K.A.T."/>
            <person name="Skrzypek M.S."/>
            <person name="Soll D."/>
            <person name="Staggs R."/>
            <person name="Stansfield I."/>
            <person name="Stumpf M.P.H."/>
            <person name="Sudbery P.E."/>
            <person name="Srikantha T."/>
            <person name="Zeng Q."/>
            <person name="Berman J."/>
            <person name="Berriman M."/>
            <person name="Heitman J."/>
            <person name="Gow N.A.R."/>
            <person name="Lorenz M.C."/>
            <person name="Birren B.W."/>
            <person name="Kellis M."/>
            <person name="Cuomo C.A."/>
        </authorList>
    </citation>
    <scope>NUCLEOTIDE SEQUENCE [LARGE SCALE GENOMIC DNA]</scope>
    <source>
        <strain>ATCC 11503 / BCRC 21390 / CBS 2605 / JCM 1781 / NBRC 1676 / NRRL YB-4239</strain>
    </source>
</reference>
<gene>
    <name evidence="1" type="primary">GET2</name>
    <name type="ORF">LELG_00360</name>
</gene>
<protein>
    <recommendedName>
        <fullName evidence="1">Golgi to ER traffic protein 2</fullName>
    </recommendedName>
</protein>
<name>GET2_LODEL</name>
<evidence type="ECO:0000255" key="1">
    <source>
        <dbReference type="HAMAP-Rule" id="MF_03114"/>
    </source>
</evidence>
<evidence type="ECO:0000256" key="2">
    <source>
        <dbReference type="SAM" id="MobiDB-lite"/>
    </source>
</evidence>
<dbReference type="EMBL" id="CH981524">
    <property type="protein sequence ID" value="EDK42182.1"/>
    <property type="molecule type" value="Genomic_DNA"/>
</dbReference>
<dbReference type="RefSeq" id="XP_001527840.1">
    <property type="nucleotide sequence ID" value="XM_001527790.1"/>
</dbReference>
<dbReference type="SMR" id="A5DSM4"/>
<dbReference type="FunCoup" id="A5DSM4">
    <property type="interactions" value="51"/>
</dbReference>
<dbReference type="STRING" id="379508.A5DSM4"/>
<dbReference type="GeneID" id="5234817"/>
<dbReference type="KEGG" id="lel:PVL30_000352"/>
<dbReference type="VEuPathDB" id="FungiDB:LELG_00360"/>
<dbReference type="eggNOG" id="ENOG502QW0H">
    <property type="taxonomic scope" value="Eukaryota"/>
</dbReference>
<dbReference type="HOGENOM" id="CLU_066477_0_0_1"/>
<dbReference type="InParanoid" id="A5DSM4"/>
<dbReference type="OMA" id="QYWDVLS"/>
<dbReference type="OrthoDB" id="4097053at2759"/>
<dbReference type="Proteomes" id="UP000001996">
    <property type="component" value="Unassembled WGS sequence"/>
</dbReference>
<dbReference type="GO" id="GO:0005789">
    <property type="term" value="C:endoplasmic reticulum membrane"/>
    <property type="evidence" value="ECO:0007669"/>
    <property type="project" value="UniProtKB-SubCell"/>
</dbReference>
<dbReference type="GO" id="GO:0043529">
    <property type="term" value="C:GET complex"/>
    <property type="evidence" value="ECO:0007669"/>
    <property type="project" value="UniProtKB-UniRule"/>
</dbReference>
<dbReference type="GO" id="GO:0000139">
    <property type="term" value="C:Golgi membrane"/>
    <property type="evidence" value="ECO:0007669"/>
    <property type="project" value="UniProtKB-SubCell"/>
</dbReference>
<dbReference type="GO" id="GO:0045048">
    <property type="term" value="P:protein insertion into ER membrane"/>
    <property type="evidence" value="ECO:0007669"/>
    <property type="project" value="UniProtKB-UniRule"/>
</dbReference>
<dbReference type="GO" id="GO:0006890">
    <property type="term" value="P:retrograde vesicle-mediated transport, Golgi to endoplasmic reticulum"/>
    <property type="evidence" value="ECO:0007669"/>
    <property type="project" value="TreeGrafter"/>
</dbReference>
<dbReference type="HAMAP" id="MF_03114">
    <property type="entry name" value="Get2"/>
    <property type="match status" value="1"/>
</dbReference>
<dbReference type="InterPro" id="IPR014802">
    <property type="entry name" value="GET2"/>
</dbReference>
<dbReference type="InterPro" id="IPR028143">
    <property type="entry name" value="Get2/sif1"/>
</dbReference>
<dbReference type="PANTHER" id="PTHR28263">
    <property type="entry name" value="GOLGI TO ER TRAFFIC PROTEIN 2"/>
    <property type="match status" value="1"/>
</dbReference>
<dbReference type="PANTHER" id="PTHR28263:SF1">
    <property type="entry name" value="GOLGI TO ER TRAFFIC PROTEIN 2"/>
    <property type="match status" value="1"/>
</dbReference>
<dbReference type="Pfam" id="PF08690">
    <property type="entry name" value="GET2"/>
    <property type="match status" value="1"/>
</dbReference>
<comment type="function">
    <text evidence="1">Required for the post-translational delivery of tail-anchored (TA) proteins to the endoplasmic reticulum. Together with GET1, acts as a membrane receptor for soluble GET3, which recognizes and selectively binds the transmembrane domain of TA proteins in the cytosol. The GET complex cooperates with the HDEL receptor ERD2 to mediate the ATP-dependent retrieval of resident ER proteins that contain a C-terminal H-D-E-L retention signal from the Golgi to the ER.</text>
</comment>
<comment type="subunit">
    <text evidence="1">Component of the Golgi to ER traffic (GET) complex, which is composed of GET1, GET2 and GET3. Within the complex, GET1 and GET2 form a heterotetramer which is stabilized by phosphatidylinositol binding and which binds to the GET3 homodimer.</text>
</comment>
<comment type="subcellular location">
    <subcellularLocation>
        <location evidence="1">Endoplasmic reticulum membrane</location>
        <topology evidence="1">Multi-pass membrane protein</topology>
    </subcellularLocation>
    <subcellularLocation>
        <location evidence="1">Golgi apparatus membrane</location>
        <topology evidence="1">Multi-pass membrane protein</topology>
    </subcellularLocation>
</comment>
<comment type="similarity">
    <text evidence="1">Belongs to the GET2 family.</text>
</comment>
<proteinExistence type="inferred from homology"/>
<feature type="chain" id="PRO_0000388634" description="Golgi to ER traffic protein 2">
    <location>
        <begin position="1"/>
        <end position="357"/>
    </location>
</feature>
<feature type="topological domain" description="Cytoplasmic" evidence="1">
    <location>
        <begin position="1"/>
        <end position="224"/>
    </location>
</feature>
<feature type="transmembrane region" description="Helical" evidence="1">
    <location>
        <begin position="225"/>
        <end position="245"/>
    </location>
</feature>
<feature type="topological domain" description="Lumenal" evidence="1">
    <location>
        <begin position="246"/>
        <end position="270"/>
    </location>
</feature>
<feature type="transmembrane region" description="Helical" evidence="1">
    <location>
        <begin position="271"/>
        <end position="290"/>
    </location>
</feature>
<feature type="topological domain" description="Cytoplasmic" evidence="1">
    <location>
        <begin position="291"/>
        <end position="334"/>
    </location>
</feature>
<feature type="transmembrane region" description="Helical" evidence="1">
    <location>
        <begin position="335"/>
        <end position="355"/>
    </location>
</feature>
<feature type="topological domain" description="Lumenal" evidence="1">
    <location>
        <begin position="356"/>
        <end position="357"/>
    </location>
</feature>
<feature type="region of interest" description="Disordered" evidence="2">
    <location>
        <begin position="65"/>
        <end position="99"/>
    </location>
</feature>
<feature type="compositionally biased region" description="Low complexity" evidence="2">
    <location>
        <begin position="65"/>
        <end position="81"/>
    </location>
</feature>
<feature type="compositionally biased region" description="Polar residues" evidence="2">
    <location>
        <begin position="88"/>
        <end position="98"/>
    </location>
</feature>
<keyword id="KW-0256">Endoplasmic reticulum</keyword>
<keyword id="KW-0931">ER-Golgi transport</keyword>
<keyword id="KW-0333">Golgi apparatus</keyword>
<keyword id="KW-0472">Membrane</keyword>
<keyword id="KW-1185">Reference proteome</keyword>
<keyword id="KW-0812">Transmembrane</keyword>
<keyword id="KW-1133">Transmembrane helix</keyword>
<keyword id="KW-0813">Transport</keyword>